<evidence type="ECO:0000255" key="1">
    <source>
        <dbReference type="HAMAP-Rule" id="MF_00501"/>
    </source>
</evidence>
<evidence type="ECO:0000256" key="2">
    <source>
        <dbReference type="SAM" id="MobiDB-lite"/>
    </source>
</evidence>
<evidence type="ECO:0000305" key="3"/>
<feature type="chain" id="PRO_0000173145" description="Large ribosomal subunit protein bL31">
    <location>
        <begin position="1"/>
        <end position="93"/>
    </location>
</feature>
<feature type="region of interest" description="Disordered" evidence="2">
    <location>
        <begin position="68"/>
        <end position="93"/>
    </location>
</feature>
<feature type="compositionally biased region" description="Basic and acidic residues" evidence="2">
    <location>
        <begin position="74"/>
        <end position="93"/>
    </location>
</feature>
<gene>
    <name evidence="1" type="primary">rpmE</name>
    <name evidence="1" type="synonym">rpl31</name>
    <name type="ordered locus">PMT_1760</name>
</gene>
<comment type="function">
    <text evidence="1">Binds the 23S rRNA.</text>
</comment>
<comment type="subunit">
    <text evidence="1">Part of the 50S ribosomal subunit.</text>
</comment>
<comment type="similarity">
    <text evidence="1">Belongs to the bacterial ribosomal protein bL31 family. Type A subfamily.</text>
</comment>
<sequence>MPKPDIHPNWYPDAKVICNGEVVMTTGSTQPELHVDVWSGNHPFFTGTQKILDTEGRVDRFMRKYGMGSADAAADEKKPDAKNNNKDNTSKED</sequence>
<name>RL31_PROMM</name>
<accession>Q7V519</accession>
<reference key="1">
    <citation type="journal article" date="2003" name="Nature">
        <title>Genome divergence in two Prochlorococcus ecotypes reflects oceanic niche differentiation.</title>
        <authorList>
            <person name="Rocap G."/>
            <person name="Larimer F.W."/>
            <person name="Lamerdin J.E."/>
            <person name="Malfatti S."/>
            <person name="Chain P."/>
            <person name="Ahlgren N.A."/>
            <person name="Arellano A."/>
            <person name="Coleman M."/>
            <person name="Hauser L."/>
            <person name="Hess W.R."/>
            <person name="Johnson Z.I."/>
            <person name="Land M.L."/>
            <person name="Lindell D."/>
            <person name="Post A.F."/>
            <person name="Regala W."/>
            <person name="Shah M."/>
            <person name="Shaw S.L."/>
            <person name="Steglich C."/>
            <person name="Sullivan M.B."/>
            <person name="Ting C.S."/>
            <person name="Tolonen A."/>
            <person name="Webb E.A."/>
            <person name="Zinser E.R."/>
            <person name="Chisholm S.W."/>
        </authorList>
    </citation>
    <scope>NUCLEOTIDE SEQUENCE [LARGE SCALE GENOMIC DNA]</scope>
    <source>
        <strain>MIT 9313</strain>
    </source>
</reference>
<keyword id="KW-1185">Reference proteome</keyword>
<keyword id="KW-0687">Ribonucleoprotein</keyword>
<keyword id="KW-0689">Ribosomal protein</keyword>
<keyword id="KW-0694">RNA-binding</keyword>
<keyword id="KW-0699">rRNA-binding</keyword>
<dbReference type="EMBL" id="BX548175">
    <property type="protein sequence ID" value="CAE21935.1"/>
    <property type="molecule type" value="Genomic_DNA"/>
</dbReference>
<dbReference type="RefSeq" id="WP_011131127.1">
    <property type="nucleotide sequence ID" value="NC_005071.1"/>
</dbReference>
<dbReference type="KEGG" id="pmt:PMT_1760"/>
<dbReference type="eggNOG" id="COG0254">
    <property type="taxonomic scope" value="Bacteria"/>
</dbReference>
<dbReference type="HOGENOM" id="CLU_114306_1_2_3"/>
<dbReference type="OrthoDB" id="9803251at2"/>
<dbReference type="Proteomes" id="UP000001423">
    <property type="component" value="Chromosome"/>
</dbReference>
<dbReference type="GO" id="GO:1990904">
    <property type="term" value="C:ribonucleoprotein complex"/>
    <property type="evidence" value="ECO:0007669"/>
    <property type="project" value="UniProtKB-KW"/>
</dbReference>
<dbReference type="GO" id="GO:0005840">
    <property type="term" value="C:ribosome"/>
    <property type="evidence" value="ECO:0007669"/>
    <property type="project" value="UniProtKB-KW"/>
</dbReference>
<dbReference type="GO" id="GO:0019843">
    <property type="term" value="F:rRNA binding"/>
    <property type="evidence" value="ECO:0007669"/>
    <property type="project" value="UniProtKB-KW"/>
</dbReference>
<dbReference type="GO" id="GO:0003735">
    <property type="term" value="F:structural constituent of ribosome"/>
    <property type="evidence" value="ECO:0007669"/>
    <property type="project" value="InterPro"/>
</dbReference>
<dbReference type="GO" id="GO:0006412">
    <property type="term" value="P:translation"/>
    <property type="evidence" value="ECO:0007669"/>
    <property type="project" value="UniProtKB-UniRule"/>
</dbReference>
<dbReference type="Gene3D" id="4.10.830.30">
    <property type="entry name" value="Ribosomal protein L31"/>
    <property type="match status" value="1"/>
</dbReference>
<dbReference type="HAMAP" id="MF_00501">
    <property type="entry name" value="Ribosomal_bL31_1"/>
    <property type="match status" value="1"/>
</dbReference>
<dbReference type="InterPro" id="IPR034704">
    <property type="entry name" value="Ribosomal_bL28/bL31-like_sf"/>
</dbReference>
<dbReference type="InterPro" id="IPR002150">
    <property type="entry name" value="Ribosomal_bL31"/>
</dbReference>
<dbReference type="InterPro" id="IPR027491">
    <property type="entry name" value="Ribosomal_bL31_A"/>
</dbReference>
<dbReference type="InterPro" id="IPR042105">
    <property type="entry name" value="Ribosomal_bL31_sf"/>
</dbReference>
<dbReference type="NCBIfam" id="TIGR00105">
    <property type="entry name" value="L31"/>
    <property type="match status" value="1"/>
</dbReference>
<dbReference type="NCBIfam" id="NF001809">
    <property type="entry name" value="PRK00528.1"/>
    <property type="match status" value="1"/>
</dbReference>
<dbReference type="PANTHER" id="PTHR33280">
    <property type="entry name" value="50S RIBOSOMAL PROTEIN L31, CHLOROPLASTIC"/>
    <property type="match status" value="1"/>
</dbReference>
<dbReference type="PANTHER" id="PTHR33280:SF1">
    <property type="entry name" value="LARGE RIBOSOMAL SUBUNIT PROTEIN BL31C"/>
    <property type="match status" value="1"/>
</dbReference>
<dbReference type="Pfam" id="PF01197">
    <property type="entry name" value="Ribosomal_L31"/>
    <property type="match status" value="1"/>
</dbReference>
<dbReference type="PRINTS" id="PR01249">
    <property type="entry name" value="RIBOSOMALL31"/>
</dbReference>
<dbReference type="SUPFAM" id="SSF143800">
    <property type="entry name" value="L28p-like"/>
    <property type="match status" value="1"/>
</dbReference>
<dbReference type="PROSITE" id="PS01143">
    <property type="entry name" value="RIBOSOMAL_L31"/>
    <property type="match status" value="1"/>
</dbReference>
<protein>
    <recommendedName>
        <fullName evidence="1">Large ribosomal subunit protein bL31</fullName>
    </recommendedName>
    <alternativeName>
        <fullName evidence="3">50S ribosomal protein L31</fullName>
    </alternativeName>
</protein>
<proteinExistence type="inferred from homology"/>
<organism>
    <name type="scientific">Prochlorococcus marinus (strain MIT 9313)</name>
    <dbReference type="NCBI Taxonomy" id="74547"/>
    <lineage>
        <taxon>Bacteria</taxon>
        <taxon>Bacillati</taxon>
        <taxon>Cyanobacteriota</taxon>
        <taxon>Cyanophyceae</taxon>
        <taxon>Synechococcales</taxon>
        <taxon>Prochlorococcaceae</taxon>
        <taxon>Prochlorococcus</taxon>
    </lineage>
</organism>